<feature type="chain" id="PRO_0000345348" description="tRNA uridine 5-carboxymethylaminomethyl modification enzyme MnmG">
    <location>
        <begin position="1"/>
        <end position="642"/>
    </location>
</feature>
<feature type="binding site" evidence="1">
    <location>
        <begin position="10"/>
        <end position="15"/>
    </location>
    <ligand>
        <name>FAD</name>
        <dbReference type="ChEBI" id="CHEBI:57692"/>
    </ligand>
</feature>
<feature type="binding site" evidence="1">
    <location>
        <position position="122"/>
    </location>
    <ligand>
        <name>FAD</name>
        <dbReference type="ChEBI" id="CHEBI:57692"/>
    </ligand>
</feature>
<feature type="binding site" evidence="1">
    <location>
        <position position="177"/>
    </location>
    <ligand>
        <name>FAD</name>
        <dbReference type="ChEBI" id="CHEBI:57692"/>
    </ligand>
</feature>
<feature type="binding site" evidence="1">
    <location>
        <begin position="269"/>
        <end position="283"/>
    </location>
    <ligand>
        <name>NAD(+)</name>
        <dbReference type="ChEBI" id="CHEBI:57540"/>
    </ligand>
</feature>
<feature type="binding site" evidence="1">
    <location>
        <position position="366"/>
    </location>
    <ligand>
        <name>FAD</name>
        <dbReference type="ChEBI" id="CHEBI:57692"/>
    </ligand>
</feature>
<organism>
    <name type="scientific">Syntrophobacter fumaroxidans (strain DSM 10017 / MPOB)</name>
    <dbReference type="NCBI Taxonomy" id="335543"/>
    <lineage>
        <taxon>Bacteria</taxon>
        <taxon>Pseudomonadati</taxon>
        <taxon>Thermodesulfobacteriota</taxon>
        <taxon>Syntrophobacteria</taxon>
        <taxon>Syntrophobacterales</taxon>
        <taxon>Syntrophobacteraceae</taxon>
        <taxon>Syntrophobacter</taxon>
    </lineage>
</organism>
<keyword id="KW-0963">Cytoplasm</keyword>
<keyword id="KW-0274">FAD</keyword>
<keyword id="KW-0285">Flavoprotein</keyword>
<keyword id="KW-0520">NAD</keyword>
<keyword id="KW-1185">Reference proteome</keyword>
<keyword id="KW-0819">tRNA processing</keyword>
<accession>A0LEF5</accession>
<dbReference type="EMBL" id="CP000478">
    <property type="protein sequence ID" value="ABK15807.1"/>
    <property type="molecule type" value="Genomic_DNA"/>
</dbReference>
<dbReference type="RefSeq" id="WP_011696980.1">
    <property type="nucleotide sequence ID" value="NC_008554.1"/>
</dbReference>
<dbReference type="SMR" id="A0LEF5"/>
<dbReference type="FunCoup" id="A0LEF5">
    <property type="interactions" value="576"/>
</dbReference>
<dbReference type="STRING" id="335543.Sfum_0104"/>
<dbReference type="KEGG" id="sfu:Sfum_0104"/>
<dbReference type="eggNOG" id="COG0445">
    <property type="taxonomic scope" value="Bacteria"/>
</dbReference>
<dbReference type="HOGENOM" id="CLU_007831_2_2_7"/>
<dbReference type="InParanoid" id="A0LEF5"/>
<dbReference type="OrthoDB" id="9815560at2"/>
<dbReference type="Proteomes" id="UP000001784">
    <property type="component" value="Chromosome"/>
</dbReference>
<dbReference type="GO" id="GO:0005829">
    <property type="term" value="C:cytosol"/>
    <property type="evidence" value="ECO:0007669"/>
    <property type="project" value="TreeGrafter"/>
</dbReference>
<dbReference type="GO" id="GO:0050660">
    <property type="term" value="F:flavin adenine dinucleotide binding"/>
    <property type="evidence" value="ECO:0007669"/>
    <property type="project" value="UniProtKB-UniRule"/>
</dbReference>
<dbReference type="GO" id="GO:0030488">
    <property type="term" value="P:tRNA methylation"/>
    <property type="evidence" value="ECO:0007669"/>
    <property type="project" value="TreeGrafter"/>
</dbReference>
<dbReference type="GO" id="GO:0002098">
    <property type="term" value="P:tRNA wobble uridine modification"/>
    <property type="evidence" value="ECO:0007669"/>
    <property type="project" value="InterPro"/>
</dbReference>
<dbReference type="FunFam" id="1.10.10.1800:FF:000001">
    <property type="entry name" value="tRNA uridine 5-carboxymethylaminomethyl modification enzyme MnmG"/>
    <property type="match status" value="1"/>
</dbReference>
<dbReference type="FunFam" id="1.10.150.570:FF:000001">
    <property type="entry name" value="tRNA uridine 5-carboxymethylaminomethyl modification enzyme MnmG"/>
    <property type="match status" value="1"/>
</dbReference>
<dbReference type="FunFam" id="3.50.50.60:FF:000002">
    <property type="entry name" value="tRNA uridine 5-carboxymethylaminomethyl modification enzyme MnmG"/>
    <property type="match status" value="1"/>
</dbReference>
<dbReference type="Gene3D" id="3.50.50.60">
    <property type="entry name" value="FAD/NAD(P)-binding domain"/>
    <property type="match status" value="2"/>
</dbReference>
<dbReference type="Gene3D" id="1.10.150.570">
    <property type="entry name" value="GidA associated domain, C-terminal subdomain"/>
    <property type="match status" value="1"/>
</dbReference>
<dbReference type="Gene3D" id="1.10.10.1800">
    <property type="entry name" value="tRNA uridine 5-carboxymethylaminomethyl modification enzyme MnmG/GidA"/>
    <property type="match status" value="1"/>
</dbReference>
<dbReference type="HAMAP" id="MF_00129">
    <property type="entry name" value="MnmG_GidA"/>
    <property type="match status" value="1"/>
</dbReference>
<dbReference type="InterPro" id="IPR036188">
    <property type="entry name" value="FAD/NAD-bd_sf"/>
</dbReference>
<dbReference type="InterPro" id="IPR049312">
    <property type="entry name" value="GIDA_C_N"/>
</dbReference>
<dbReference type="InterPro" id="IPR004416">
    <property type="entry name" value="MnmG"/>
</dbReference>
<dbReference type="InterPro" id="IPR002218">
    <property type="entry name" value="MnmG-rel"/>
</dbReference>
<dbReference type="InterPro" id="IPR020595">
    <property type="entry name" value="MnmG-rel_CS"/>
</dbReference>
<dbReference type="InterPro" id="IPR026904">
    <property type="entry name" value="MnmG_C"/>
</dbReference>
<dbReference type="InterPro" id="IPR047001">
    <property type="entry name" value="MnmG_C_subdom"/>
</dbReference>
<dbReference type="InterPro" id="IPR044920">
    <property type="entry name" value="MnmG_C_subdom_sf"/>
</dbReference>
<dbReference type="InterPro" id="IPR040131">
    <property type="entry name" value="MnmG_N"/>
</dbReference>
<dbReference type="NCBIfam" id="TIGR00136">
    <property type="entry name" value="mnmG_gidA"/>
    <property type="match status" value="1"/>
</dbReference>
<dbReference type="PANTHER" id="PTHR11806">
    <property type="entry name" value="GLUCOSE INHIBITED DIVISION PROTEIN A"/>
    <property type="match status" value="1"/>
</dbReference>
<dbReference type="PANTHER" id="PTHR11806:SF0">
    <property type="entry name" value="PROTEIN MTO1 HOMOLOG, MITOCHONDRIAL"/>
    <property type="match status" value="1"/>
</dbReference>
<dbReference type="Pfam" id="PF01134">
    <property type="entry name" value="GIDA"/>
    <property type="match status" value="1"/>
</dbReference>
<dbReference type="Pfam" id="PF21680">
    <property type="entry name" value="GIDA_C_1st"/>
    <property type="match status" value="1"/>
</dbReference>
<dbReference type="Pfam" id="PF13932">
    <property type="entry name" value="SAM_GIDA_C"/>
    <property type="match status" value="1"/>
</dbReference>
<dbReference type="PRINTS" id="PR00368">
    <property type="entry name" value="FADPNR"/>
</dbReference>
<dbReference type="PRINTS" id="PR00411">
    <property type="entry name" value="PNDRDTASEI"/>
</dbReference>
<dbReference type="SMART" id="SM01228">
    <property type="entry name" value="GIDA_assoc_3"/>
    <property type="match status" value="1"/>
</dbReference>
<dbReference type="SUPFAM" id="SSF51905">
    <property type="entry name" value="FAD/NAD(P)-binding domain"/>
    <property type="match status" value="1"/>
</dbReference>
<dbReference type="PROSITE" id="PS01280">
    <property type="entry name" value="GIDA_1"/>
    <property type="match status" value="1"/>
</dbReference>
<reference key="1">
    <citation type="submission" date="2006-10" db="EMBL/GenBank/DDBJ databases">
        <title>Complete sequence of Syntrophobacter fumaroxidans MPOB.</title>
        <authorList>
            <consortium name="US DOE Joint Genome Institute"/>
            <person name="Copeland A."/>
            <person name="Lucas S."/>
            <person name="Lapidus A."/>
            <person name="Barry K."/>
            <person name="Detter J.C."/>
            <person name="Glavina del Rio T."/>
            <person name="Hammon N."/>
            <person name="Israni S."/>
            <person name="Pitluck S."/>
            <person name="Goltsman E.G."/>
            <person name="Martinez M."/>
            <person name="Schmutz J."/>
            <person name="Larimer F."/>
            <person name="Land M."/>
            <person name="Hauser L."/>
            <person name="Kyrpides N."/>
            <person name="Kim E."/>
            <person name="Boone D.R."/>
            <person name="Brockman F."/>
            <person name="Culley D."/>
            <person name="Ferry J."/>
            <person name="Gunsalus R."/>
            <person name="McInerney M.J."/>
            <person name="Morrison M."/>
            <person name="Plugge C."/>
            <person name="Rohlin L."/>
            <person name="Scholten J."/>
            <person name="Sieber J."/>
            <person name="Stams A.J.M."/>
            <person name="Worm P."/>
            <person name="Henstra A.M."/>
            <person name="Richardson P."/>
        </authorList>
    </citation>
    <scope>NUCLEOTIDE SEQUENCE [LARGE SCALE GENOMIC DNA]</scope>
    <source>
        <strain>DSM 10017 / MPOB</strain>
    </source>
</reference>
<evidence type="ECO:0000255" key="1">
    <source>
        <dbReference type="HAMAP-Rule" id="MF_00129"/>
    </source>
</evidence>
<gene>
    <name evidence="1" type="primary">mnmG</name>
    <name evidence="1" type="synonym">gidA</name>
    <name type="ordered locus">Sfum_0104</name>
</gene>
<protein>
    <recommendedName>
        <fullName evidence="1">tRNA uridine 5-carboxymethylaminomethyl modification enzyme MnmG</fullName>
    </recommendedName>
    <alternativeName>
        <fullName evidence="1">Glucose-inhibited division protein A</fullName>
    </alternativeName>
</protein>
<proteinExistence type="inferred from homology"/>
<comment type="function">
    <text evidence="1">NAD-binding protein involved in the addition of a carboxymethylaminomethyl (cmnm) group at the wobble position (U34) of certain tRNAs, forming tRNA-cmnm(5)s(2)U34.</text>
</comment>
<comment type="cofactor">
    <cofactor evidence="1">
        <name>FAD</name>
        <dbReference type="ChEBI" id="CHEBI:57692"/>
    </cofactor>
</comment>
<comment type="subunit">
    <text evidence="1">Homodimer. Heterotetramer of two MnmE and two MnmG subunits.</text>
</comment>
<comment type="subcellular location">
    <subcellularLocation>
        <location evidence="1">Cytoplasm</location>
    </subcellularLocation>
</comment>
<comment type="similarity">
    <text evidence="1">Belongs to the MnmG family.</text>
</comment>
<sequence length="642" mass="70555">MNKYEVIVVGAGHAGCEAALAAARMGCRTLVLSICLDTVAHMPCSPSVGGVGKGHLVREIDALGGRMALITDRTAIQFRLLNTKKGPAVWGTRTQNDKARYRISMKHCLESEPNLDLKQAHVESLAVEGNRIVGVIDQLGVFFGADAVVLATGTFLRGLVHIGTTSVEAGRAGELASYPLANQLQRLGFTLGRMKTGTPARLGRRSIDFSRFREQHGDEAPKPFSLFTDSIALPQVSCFIGKTHQRTHELVRRHIHLSPLYNGTIRGVSARYCPSLEDKVMRFPDKDFHQIILEPEGLDTEEVYASGTGNSLPYDIQLRLIHSVPGLEEAEVMRPAYAIEYDFVQPTQLKATLGSKLVEGLYMAGQINGTSGYEEAAGQGLWAGINAALKAQGRPPFILDRSEAYLAVMVDDLVTRGTNEPYRIFTSRAEYRLLLREDNADLRLLEKGCELGLHSADAAKELRERRGAIRNELERLRLTHVRPSAQVNQTLAENHSPPLDAPAPLDKLLKRPELNYSTVAILSPPPEPLSSKVTEQVEVECKYEGYLKRQEAEVAKFRQLEQAAIPEDLMYDDIPGLSNELRQKLGAVRPLSLGQATRIPGMTPAAVSVLMVHLRRRAQGGPFLAPVLDPGVNMHSQKKKLA</sequence>
<name>MNMG_SYNFM</name>